<sequence length="99" mass="11200">MALTKAEMAEKLFDEVGLNKREAKEFVDAFFDVLREALEQGRQVKLSGFGNFDLRRKNQRPGRNPKTGEEIPISARTVVTFRPGQKLKERVEAYAGSGQ</sequence>
<evidence type="ECO:0000255" key="1">
    <source>
        <dbReference type="HAMAP-Rule" id="MF_00380"/>
    </source>
</evidence>
<feature type="chain" id="PRO_1000122170" description="Integration host factor subunit alpha">
    <location>
        <begin position="1"/>
        <end position="99"/>
    </location>
</feature>
<name>IHFA_STRM5</name>
<organism>
    <name type="scientific">Stenotrophomonas maltophilia (strain R551-3)</name>
    <dbReference type="NCBI Taxonomy" id="391008"/>
    <lineage>
        <taxon>Bacteria</taxon>
        <taxon>Pseudomonadati</taxon>
        <taxon>Pseudomonadota</taxon>
        <taxon>Gammaproteobacteria</taxon>
        <taxon>Lysobacterales</taxon>
        <taxon>Lysobacteraceae</taxon>
        <taxon>Stenotrophomonas</taxon>
        <taxon>Stenotrophomonas maltophilia group</taxon>
    </lineage>
</organism>
<keyword id="KW-0233">DNA recombination</keyword>
<keyword id="KW-0238">DNA-binding</keyword>
<keyword id="KW-0804">Transcription</keyword>
<keyword id="KW-0805">Transcription regulation</keyword>
<keyword id="KW-0810">Translation regulation</keyword>
<protein>
    <recommendedName>
        <fullName evidence="1">Integration host factor subunit alpha</fullName>
        <shortName evidence="1">IHF-alpha</shortName>
    </recommendedName>
</protein>
<dbReference type="EMBL" id="CP001111">
    <property type="protein sequence ID" value="ACF52499.1"/>
    <property type="molecule type" value="Genomic_DNA"/>
</dbReference>
<dbReference type="RefSeq" id="WP_005410432.1">
    <property type="nucleotide sequence ID" value="NC_011071.1"/>
</dbReference>
<dbReference type="SMR" id="B4SQG8"/>
<dbReference type="STRING" id="391008.Smal_2799"/>
<dbReference type="KEGG" id="smt:Smal_2799"/>
<dbReference type="eggNOG" id="COG0776">
    <property type="taxonomic scope" value="Bacteria"/>
</dbReference>
<dbReference type="HOGENOM" id="CLU_105066_1_3_6"/>
<dbReference type="OrthoDB" id="9797747at2"/>
<dbReference type="Proteomes" id="UP000001867">
    <property type="component" value="Chromosome"/>
</dbReference>
<dbReference type="GO" id="GO:0005829">
    <property type="term" value="C:cytosol"/>
    <property type="evidence" value="ECO:0007669"/>
    <property type="project" value="TreeGrafter"/>
</dbReference>
<dbReference type="GO" id="GO:0003677">
    <property type="term" value="F:DNA binding"/>
    <property type="evidence" value="ECO:0007669"/>
    <property type="project" value="UniProtKB-UniRule"/>
</dbReference>
<dbReference type="GO" id="GO:0030527">
    <property type="term" value="F:structural constituent of chromatin"/>
    <property type="evidence" value="ECO:0007669"/>
    <property type="project" value="InterPro"/>
</dbReference>
<dbReference type="GO" id="GO:0006310">
    <property type="term" value="P:DNA recombination"/>
    <property type="evidence" value="ECO:0007669"/>
    <property type="project" value="UniProtKB-UniRule"/>
</dbReference>
<dbReference type="GO" id="GO:0009893">
    <property type="term" value="P:positive regulation of metabolic process"/>
    <property type="evidence" value="ECO:0007669"/>
    <property type="project" value="UniProtKB-ARBA"/>
</dbReference>
<dbReference type="GO" id="GO:0006355">
    <property type="term" value="P:regulation of DNA-templated transcription"/>
    <property type="evidence" value="ECO:0007669"/>
    <property type="project" value="UniProtKB-UniRule"/>
</dbReference>
<dbReference type="GO" id="GO:0006417">
    <property type="term" value="P:regulation of translation"/>
    <property type="evidence" value="ECO:0007669"/>
    <property type="project" value="UniProtKB-UniRule"/>
</dbReference>
<dbReference type="CDD" id="cd13835">
    <property type="entry name" value="IHF_A"/>
    <property type="match status" value="1"/>
</dbReference>
<dbReference type="FunFam" id="4.10.520.10:FF:000002">
    <property type="entry name" value="Integration host factor subunit alpha"/>
    <property type="match status" value="1"/>
</dbReference>
<dbReference type="Gene3D" id="4.10.520.10">
    <property type="entry name" value="IHF-like DNA-binding proteins"/>
    <property type="match status" value="1"/>
</dbReference>
<dbReference type="HAMAP" id="MF_00380">
    <property type="entry name" value="IHF_alpha"/>
    <property type="match status" value="1"/>
</dbReference>
<dbReference type="InterPro" id="IPR000119">
    <property type="entry name" value="Hist_DNA-bd"/>
</dbReference>
<dbReference type="InterPro" id="IPR020816">
    <property type="entry name" value="Histone-like_DNA-bd_CS"/>
</dbReference>
<dbReference type="InterPro" id="IPR010992">
    <property type="entry name" value="IHF-like_DNA-bd_dom_sf"/>
</dbReference>
<dbReference type="InterPro" id="IPR005684">
    <property type="entry name" value="IHF_alpha"/>
</dbReference>
<dbReference type="NCBIfam" id="TIGR00987">
    <property type="entry name" value="himA"/>
    <property type="match status" value="1"/>
</dbReference>
<dbReference type="NCBIfam" id="NF001401">
    <property type="entry name" value="PRK00285.1"/>
    <property type="match status" value="1"/>
</dbReference>
<dbReference type="PANTHER" id="PTHR33175">
    <property type="entry name" value="DNA-BINDING PROTEIN HU"/>
    <property type="match status" value="1"/>
</dbReference>
<dbReference type="PANTHER" id="PTHR33175:SF2">
    <property type="entry name" value="INTEGRATION HOST FACTOR SUBUNIT ALPHA"/>
    <property type="match status" value="1"/>
</dbReference>
<dbReference type="Pfam" id="PF00216">
    <property type="entry name" value="Bac_DNA_binding"/>
    <property type="match status" value="1"/>
</dbReference>
<dbReference type="PRINTS" id="PR01727">
    <property type="entry name" value="DNABINDINGHU"/>
</dbReference>
<dbReference type="SMART" id="SM00411">
    <property type="entry name" value="BHL"/>
    <property type="match status" value="1"/>
</dbReference>
<dbReference type="SUPFAM" id="SSF47729">
    <property type="entry name" value="IHF-like DNA-binding proteins"/>
    <property type="match status" value="1"/>
</dbReference>
<dbReference type="PROSITE" id="PS00045">
    <property type="entry name" value="HISTONE_LIKE"/>
    <property type="match status" value="1"/>
</dbReference>
<reference key="1">
    <citation type="submission" date="2008-06" db="EMBL/GenBank/DDBJ databases">
        <title>Complete sequence of Stenotrophomonas maltophilia R551-3.</title>
        <authorList>
            <consortium name="US DOE Joint Genome Institute"/>
            <person name="Lucas S."/>
            <person name="Copeland A."/>
            <person name="Lapidus A."/>
            <person name="Glavina del Rio T."/>
            <person name="Dalin E."/>
            <person name="Tice H."/>
            <person name="Pitluck S."/>
            <person name="Chain P."/>
            <person name="Malfatti S."/>
            <person name="Shin M."/>
            <person name="Vergez L."/>
            <person name="Lang D."/>
            <person name="Schmutz J."/>
            <person name="Larimer F."/>
            <person name="Land M."/>
            <person name="Hauser L."/>
            <person name="Kyrpides N."/>
            <person name="Mikhailova N."/>
            <person name="Taghavi S."/>
            <person name="Monchy S."/>
            <person name="Newman L."/>
            <person name="Vangronsveld J."/>
            <person name="van der Lelie D."/>
            <person name="Richardson P."/>
        </authorList>
    </citation>
    <scope>NUCLEOTIDE SEQUENCE [LARGE SCALE GENOMIC DNA]</scope>
    <source>
        <strain>R551-3</strain>
    </source>
</reference>
<proteinExistence type="inferred from homology"/>
<comment type="function">
    <text evidence="1">This protein is one of the two subunits of integration host factor, a specific DNA-binding protein that functions in genetic recombination as well as in transcriptional and translational control.</text>
</comment>
<comment type="subunit">
    <text evidence="1">Heterodimer of an alpha and a beta chain.</text>
</comment>
<comment type="similarity">
    <text evidence="1">Belongs to the bacterial histone-like protein family.</text>
</comment>
<accession>B4SQG8</accession>
<gene>
    <name evidence="1" type="primary">ihfA</name>
    <name evidence="1" type="synonym">himA</name>
    <name type="ordered locus">Smal_2799</name>
</gene>